<proteinExistence type="inferred from homology"/>
<protein>
    <recommendedName>
        <fullName>Peptide methionine sulfoxide reductase MsrA/MsrB</fullName>
    </recommendedName>
    <domain>
        <recommendedName>
            <fullName>Peptide methionine sulfoxide reductase MsrA</fullName>
            <shortName>Protein-methionine-S-oxide reductase</shortName>
            <ecNumber>1.8.4.11</ecNumber>
        </recommendedName>
        <alternativeName>
            <fullName>Peptide-methionine (S)-S-oxide reductase</fullName>
            <shortName>Peptide Met(O) reductase</shortName>
        </alternativeName>
    </domain>
    <domain>
        <recommendedName>
            <fullName>Peptide methionine sulfoxide reductase MsrB</fullName>
            <ecNumber>1.8.4.12</ecNumber>
        </recommendedName>
        <alternativeName>
            <fullName>Peptide-methionine (R)-S-oxide reductase</fullName>
        </alternativeName>
    </domain>
</protein>
<dbReference type="EC" id="1.8.4.11"/>
<dbReference type="EC" id="1.8.4.12"/>
<dbReference type="EMBL" id="AE003853">
    <property type="protein sequence ID" value="AAF96516.1"/>
    <property type="status" value="ALT_INIT"/>
    <property type="molecule type" value="Genomic_DNA"/>
</dbReference>
<dbReference type="PIR" id="C82439">
    <property type="entry name" value="C82439"/>
</dbReference>
<dbReference type="RefSeq" id="NP_233004.1">
    <property type="nucleotide sequence ID" value="NC_002506.1"/>
</dbReference>
<dbReference type="SMR" id="Q9KLX6"/>
<dbReference type="STRING" id="243277.VC_A0615"/>
<dbReference type="DNASU" id="2612594"/>
<dbReference type="EnsemblBacteria" id="AAF96516">
    <property type="protein sequence ID" value="AAF96516"/>
    <property type="gene ID" value="VC_A0615"/>
</dbReference>
<dbReference type="KEGG" id="vch:VC_A0615"/>
<dbReference type="PATRIC" id="fig|243277.26.peg.3243"/>
<dbReference type="eggNOG" id="COG0225">
    <property type="taxonomic scope" value="Bacteria"/>
</dbReference>
<dbReference type="eggNOG" id="COG0229">
    <property type="taxonomic scope" value="Bacteria"/>
</dbReference>
<dbReference type="HOGENOM" id="CLU_031040_0_1_6"/>
<dbReference type="Proteomes" id="UP000000584">
    <property type="component" value="Chromosome 2"/>
</dbReference>
<dbReference type="GO" id="GO:0005737">
    <property type="term" value="C:cytoplasm"/>
    <property type="evidence" value="ECO:0000318"/>
    <property type="project" value="GO_Central"/>
</dbReference>
<dbReference type="GO" id="GO:0033744">
    <property type="term" value="F:L-methionine:thioredoxin-disulfide S-oxidoreductase activity"/>
    <property type="evidence" value="ECO:0007669"/>
    <property type="project" value="RHEA"/>
</dbReference>
<dbReference type="GO" id="GO:0033743">
    <property type="term" value="F:peptide-methionine (R)-S-oxide reductase activity"/>
    <property type="evidence" value="ECO:0000318"/>
    <property type="project" value="GO_Central"/>
</dbReference>
<dbReference type="GO" id="GO:0008113">
    <property type="term" value="F:peptide-methionine (S)-S-oxide reductase activity"/>
    <property type="evidence" value="ECO:0007669"/>
    <property type="project" value="UniProtKB-UniRule"/>
</dbReference>
<dbReference type="GO" id="GO:0036211">
    <property type="term" value="P:protein modification process"/>
    <property type="evidence" value="ECO:0007669"/>
    <property type="project" value="UniProtKB-UniRule"/>
</dbReference>
<dbReference type="GO" id="GO:0030091">
    <property type="term" value="P:protein repair"/>
    <property type="evidence" value="ECO:0007669"/>
    <property type="project" value="InterPro"/>
</dbReference>
<dbReference type="GO" id="GO:0006979">
    <property type="term" value="P:response to oxidative stress"/>
    <property type="evidence" value="ECO:0007669"/>
    <property type="project" value="InterPro"/>
</dbReference>
<dbReference type="FunFam" id="3.30.1060.10:FF:000003">
    <property type="entry name" value="Peptide methionine sulfoxide reductase MsrA"/>
    <property type="match status" value="1"/>
</dbReference>
<dbReference type="FunFam" id="2.170.150.20:FF:000003">
    <property type="entry name" value="Peptide methionine sulfoxide reductase MsrB"/>
    <property type="match status" value="1"/>
</dbReference>
<dbReference type="Gene3D" id="2.170.150.20">
    <property type="entry name" value="Peptide methionine sulfoxide reductase"/>
    <property type="match status" value="1"/>
</dbReference>
<dbReference type="Gene3D" id="3.30.1060.10">
    <property type="entry name" value="Peptide methionine sulphoxide reductase MsrA"/>
    <property type="match status" value="1"/>
</dbReference>
<dbReference type="HAMAP" id="MF_01401">
    <property type="entry name" value="MsrA"/>
    <property type="match status" value="1"/>
</dbReference>
<dbReference type="HAMAP" id="MF_01400">
    <property type="entry name" value="MsrB"/>
    <property type="match status" value="1"/>
</dbReference>
<dbReference type="InterPro" id="IPR002569">
    <property type="entry name" value="Met_Sox_Rdtase_MsrA_dom"/>
</dbReference>
<dbReference type="InterPro" id="IPR036509">
    <property type="entry name" value="Met_Sox_Rdtase_MsrA_sf"/>
</dbReference>
<dbReference type="InterPro" id="IPR028427">
    <property type="entry name" value="Met_Sox_Rdtase_MsrB"/>
</dbReference>
<dbReference type="InterPro" id="IPR002579">
    <property type="entry name" value="Met_Sox_Rdtase_MsrB_dom"/>
</dbReference>
<dbReference type="InterPro" id="IPR011057">
    <property type="entry name" value="Mss4-like_sf"/>
</dbReference>
<dbReference type="NCBIfam" id="TIGR00401">
    <property type="entry name" value="msrA"/>
    <property type="match status" value="1"/>
</dbReference>
<dbReference type="NCBIfam" id="TIGR00357">
    <property type="entry name" value="peptide-methionine (R)-S-oxide reductase MsrB"/>
    <property type="match status" value="1"/>
</dbReference>
<dbReference type="PANTHER" id="PTHR10173">
    <property type="entry name" value="METHIONINE SULFOXIDE REDUCTASE"/>
    <property type="match status" value="1"/>
</dbReference>
<dbReference type="PANTHER" id="PTHR10173:SF59">
    <property type="entry name" value="PEPTIDE METHIONINE SULFOXIDE REDUCTASE MSRA_MSRB"/>
    <property type="match status" value="1"/>
</dbReference>
<dbReference type="Pfam" id="PF01625">
    <property type="entry name" value="PMSR"/>
    <property type="match status" value="1"/>
</dbReference>
<dbReference type="Pfam" id="PF01641">
    <property type="entry name" value="SelR"/>
    <property type="match status" value="1"/>
</dbReference>
<dbReference type="SUPFAM" id="SSF51316">
    <property type="entry name" value="Mss4-like"/>
    <property type="match status" value="1"/>
</dbReference>
<dbReference type="SUPFAM" id="SSF55068">
    <property type="entry name" value="Peptide methionine sulfoxide reductase"/>
    <property type="match status" value="1"/>
</dbReference>
<dbReference type="PROSITE" id="PS51790">
    <property type="entry name" value="MSRB"/>
    <property type="match status" value="1"/>
</dbReference>
<organism>
    <name type="scientific">Vibrio cholerae serotype O1 (strain ATCC 39315 / El Tor Inaba N16961)</name>
    <dbReference type="NCBI Taxonomy" id="243277"/>
    <lineage>
        <taxon>Bacteria</taxon>
        <taxon>Pseudomonadati</taxon>
        <taxon>Pseudomonadota</taxon>
        <taxon>Gammaproteobacteria</taxon>
        <taxon>Vibrionales</taxon>
        <taxon>Vibrionaceae</taxon>
        <taxon>Vibrio</taxon>
    </lineage>
</organism>
<sequence length="378" mass="43477">MKRLFAWGAPLFALVALTLSLFSQADTKPSTIDSTSANYQQATLAGGCFWCTESDMEKLPGVVDVISGYAGGDVDNPTYKQVSSGKTGHIEVIQVTFDPKIVTYEQVLDNFFRHIDPTDDQGSFVDRGEQYRPAIFYHNAEQLEVAKRFMMEIDQLGIFKKPLKTELIEFKKFWPAEDYHQDYYKKNKVRYNYYRYASGRDQYLDEIFGADRNTHPKTLRQWIDEKNGQANVKAYVRPSDEQIRAKLTSLQYKVTQRDGTERPFDNEYWDNKEEGIYVDIVSGEPLFSSTDKYDSKTGWPSFTQPLNSSYIVTKDDNSLFYTRTEVRSRFADSHLGHVFNDGPAPTGLRYCMNSAAMRFIPKQEMAAQGYGEYLALFK</sequence>
<reference key="1">
    <citation type="journal article" date="2000" name="Nature">
        <title>DNA sequence of both chromosomes of the cholera pathogen Vibrio cholerae.</title>
        <authorList>
            <person name="Heidelberg J.F."/>
            <person name="Eisen J.A."/>
            <person name="Nelson W.C."/>
            <person name="Clayton R.A."/>
            <person name="Gwinn M.L."/>
            <person name="Dodson R.J."/>
            <person name="Haft D.H."/>
            <person name="Hickey E.K."/>
            <person name="Peterson J.D."/>
            <person name="Umayam L.A."/>
            <person name="Gill S.R."/>
            <person name="Nelson K.E."/>
            <person name="Read T.D."/>
            <person name="Tettelin H."/>
            <person name="Richardson D.L."/>
            <person name="Ermolaeva M.D."/>
            <person name="Vamathevan J.J."/>
            <person name="Bass S."/>
            <person name="Qin H."/>
            <person name="Dragoi I."/>
            <person name="Sellers P."/>
            <person name="McDonald L.A."/>
            <person name="Utterback T.R."/>
            <person name="Fleischmann R.D."/>
            <person name="Nierman W.C."/>
            <person name="White O."/>
            <person name="Salzberg S.L."/>
            <person name="Smith H.O."/>
            <person name="Colwell R.R."/>
            <person name="Mekalanos J.J."/>
            <person name="Venter J.C."/>
            <person name="Fraser C.M."/>
        </authorList>
    </citation>
    <scope>NUCLEOTIDE SEQUENCE [LARGE SCALE GENOMIC DNA]</scope>
    <source>
        <strain>ATCC 39315 / El Tor Inaba N16961</strain>
    </source>
</reference>
<keyword id="KW-0511">Multifunctional enzyme</keyword>
<keyword id="KW-0560">Oxidoreductase</keyword>
<keyword id="KW-1185">Reference proteome</keyword>
<feature type="chain" id="PRO_0000138526" description="Peptide methionine sulfoxide reductase MsrA/MsrB">
    <location>
        <begin position="1"/>
        <end position="378"/>
    </location>
</feature>
<feature type="domain" description="MsrB" evidence="2">
    <location>
        <begin position="240"/>
        <end position="362"/>
    </location>
</feature>
<feature type="region of interest" description="Peptide methionine sulfoxide reductase A">
    <location>
        <begin position="40"/>
        <end position="197"/>
    </location>
</feature>
<feature type="active site" evidence="1">
    <location>
        <position position="48"/>
    </location>
</feature>
<feature type="active site" description="Nucleophile" evidence="2">
    <location>
        <position position="351"/>
    </location>
</feature>
<accession>Q9KLX6</accession>
<comment type="function">
    <text evidence="1">Has an important function as a repair enzyme for proteins that have been inactivated by oxidation. Catalyzes the reversible oxidation-reduction of methionine sulfoxide in proteins to methionine (By similarity).</text>
</comment>
<comment type="catalytic activity">
    <reaction>
        <text>L-methionyl-[protein] + [thioredoxin]-disulfide + H2O = L-methionyl-(S)-S-oxide-[protein] + [thioredoxin]-dithiol</text>
        <dbReference type="Rhea" id="RHEA:14217"/>
        <dbReference type="Rhea" id="RHEA-COMP:10698"/>
        <dbReference type="Rhea" id="RHEA-COMP:10700"/>
        <dbReference type="Rhea" id="RHEA-COMP:12313"/>
        <dbReference type="Rhea" id="RHEA-COMP:12315"/>
        <dbReference type="ChEBI" id="CHEBI:15377"/>
        <dbReference type="ChEBI" id="CHEBI:16044"/>
        <dbReference type="ChEBI" id="CHEBI:29950"/>
        <dbReference type="ChEBI" id="CHEBI:44120"/>
        <dbReference type="ChEBI" id="CHEBI:50058"/>
        <dbReference type="EC" id="1.8.4.11"/>
    </reaction>
</comment>
<comment type="catalytic activity">
    <reaction>
        <text>[thioredoxin]-disulfide + L-methionine + H2O = L-methionine (S)-S-oxide + [thioredoxin]-dithiol</text>
        <dbReference type="Rhea" id="RHEA:19993"/>
        <dbReference type="Rhea" id="RHEA-COMP:10698"/>
        <dbReference type="Rhea" id="RHEA-COMP:10700"/>
        <dbReference type="ChEBI" id="CHEBI:15377"/>
        <dbReference type="ChEBI" id="CHEBI:29950"/>
        <dbReference type="ChEBI" id="CHEBI:50058"/>
        <dbReference type="ChEBI" id="CHEBI:57844"/>
        <dbReference type="ChEBI" id="CHEBI:58772"/>
        <dbReference type="EC" id="1.8.4.11"/>
    </reaction>
</comment>
<comment type="catalytic activity">
    <reaction>
        <text>L-methionyl-[protein] + [thioredoxin]-disulfide + H2O = L-methionyl-(R)-S-oxide-[protein] + [thioredoxin]-dithiol</text>
        <dbReference type="Rhea" id="RHEA:24164"/>
        <dbReference type="Rhea" id="RHEA-COMP:10698"/>
        <dbReference type="Rhea" id="RHEA-COMP:10700"/>
        <dbReference type="Rhea" id="RHEA-COMP:12313"/>
        <dbReference type="Rhea" id="RHEA-COMP:12314"/>
        <dbReference type="ChEBI" id="CHEBI:15377"/>
        <dbReference type="ChEBI" id="CHEBI:16044"/>
        <dbReference type="ChEBI" id="CHEBI:29950"/>
        <dbReference type="ChEBI" id="CHEBI:45764"/>
        <dbReference type="ChEBI" id="CHEBI:50058"/>
        <dbReference type="EC" id="1.8.4.12"/>
    </reaction>
</comment>
<comment type="similarity">
    <text evidence="3">In the N-terminal section; belongs to the MsrA Met sulfoxide reductase family.</text>
</comment>
<comment type="similarity">
    <text evidence="3">In the C-terminal section; belongs to the MsrB Met sulfoxide reductase family.</text>
</comment>
<comment type="sequence caution" evidence="3">
    <conflict type="erroneous initiation">
        <sequence resource="EMBL-CDS" id="AAF96516"/>
    </conflict>
</comment>
<evidence type="ECO:0000250" key="1"/>
<evidence type="ECO:0000255" key="2">
    <source>
        <dbReference type="PROSITE-ProRule" id="PRU01126"/>
    </source>
</evidence>
<evidence type="ECO:0000305" key="3"/>
<name>MSRAB_VIBCH</name>
<gene>
    <name type="primary">msrAB</name>
    <name type="ordered locus">VC_A0615</name>
</gene>